<gene>
    <name evidence="5 10" type="primary">Gsdmc</name>
    <name evidence="5" type="synonym">Gsdmc1</name>
    <name evidence="4" type="synonym">Mlze</name>
</gene>
<reference evidence="8" key="1">
    <citation type="journal article" date="2001" name="Jpn. J. Cancer Res.">
        <title>Structure, expression and chromosome mapping of MLZE, a novel gene which is preferentially expressed in metastatic melanoma cells.</title>
        <authorList>
            <person name="Watabe K."/>
            <person name="Ito A."/>
            <person name="Asada H."/>
            <person name="Endo Y."/>
            <person name="Kobayashi T."/>
            <person name="Nakamoto K."/>
            <person name="Itami S."/>
            <person name="Takao S."/>
            <person name="Shinomura Y."/>
            <person name="Aikou T."/>
            <person name="Yoshikawa K."/>
            <person name="Matsuzawa Y."/>
            <person name="Kitamura Y."/>
            <person name="Nojima H."/>
        </authorList>
    </citation>
    <scope>NUCLEOTIDE SEQUENCE [MRNA]</scope>
    <source>
        <tissue evidence="3">Melanoma</tissue>
    </source>
</reference>
<reference evidence="9" key="2">
    <citation type="journal article" date="2005" name="Science">
        <title>The transcriptional landscape of the mammalian genome.</title>
        <authorList>
            <person name="Carninci P."/>
            <person name="Kasukawa T."/>
            <person name="Katayama S."/>
            <person name="Gough J."/>
            <person name="Frith M.C."/>
            <person name="Maeda N."/>
            <person name="Oyama R."/>
            <person name="Ravasi T."/>
            <person name="Lenhard B."/>
            <person name="Wells C."/>
            <person name="Kodzius R."/>
            <person name="Shimokawa K."/>
            <person name="Bajic V.B."/>
            <person name="Brenner S.E."/>
            <person name="Batalov S."/>
            <person name="Forrest A.R."/>
            <person name="Zavolan M."/>
            <person name="Davis M.J."/>
            <person name="Wilming L.G."/>
            <person name="Aidinis V."/>
            <person name="Allen J.E."/>
            <person name="Ambesi-Impiombato A."/>
            <person name="Apweiler R."/>
            <person name="Aturaliya R.N."/>
            <person name="Bailey T.L."/>
            <person name="Bansal M."/>
            <person name="Baxter L."/>
            <person name="Beisel K.W."/>
            <person name="Bersano T."/>
            <person name="Bono H."/>
            <person name="Chalk A.M."/>
            <person name="Chiu K.P."/>
            <person name="Choudhary V."/>
            <person name="Christoffels A."/>
            <person name="Clutterbuck D.R."/>
            <person name="Crowe M.L."/>
            <person name="Dalla E."/>
            <person name="Dalrymple B.P."/>
            <person name="de Bono B."/>
            <person name="Della Gatta G."/>
            <person name="di Bernardo D."/>
            <person name="Down T."/>
            <person name="Engstrom P."/>
            <person name="Fagiolini M."/>
            <person name="Faulkner G."/>
            <person name="Fletcher C.F."/>
            <person name="Fukushima T."/>
            <person name="Furuno M."/>
            <person name="Futaki S."/>
            <person name="Gariboldi M."/>
            <person name="Georgii-Hemming P."/>
            <person name="Gingeras T.R."/>
            <person name="Gojobori T."/>
            <person name="Green R.E."/>
            <person name="Gustincich S."/>
            <person name="Harbers M."/>
            <person name="Hayashi Y."/>
            <person name="Hensch T.K."/>
            <person name="Hirokawa N."/>
            <person name="Hill D."/>
            <person name="Huminiecki L."/>
            <person name="Iacono M."/>
            <person name="Ikeo K."/>
            <person name="Iwama A."/>
            <person name="Ishikawa T."/>
            <person name="Jakt M."/>
            <person name="Kanapin A."/>
            <person name="Katoh M."/>
            <person name="Kawasawa Y."/>
            <person name="Kelso J."/>
            <person name="Kitamura H."/>
            <person name="Kitano H."/>
            <person name="Kollias G."/>
            <person name="Krishnan S.P."/>
            <person name="Kruger A."/>
            <person name="Kummerfeld S.K."/>
            <person name="Kurochkin I.V."/>
            <person name="Lareau L.F."/>
            <person name="Lazarevic D."/>
            <person name="Lipovich L."/>
            <person name="Liu J."/>
            <person name="Liuni S."/>
            <person name="McWilliam S."/>
            <person name="Madan Babu M."/>
            <person name="Madera M."/>
            <person name="Marchionni L."/>
            <person name="Matsuda H."/>
            <person name="Matsuzawa S."/>
            <person name="Miki H."/>
            <person name="Mignone F."/>
            <person name="Miyake S."/>
            <person name="Morris K."/>
            <person name="Mottagui-Tabar S."/>
            <person name="Mulder N."/>
            <person name="Nakano N."/>
            <person name="Nakauchi H."/>
            <person name="Ng P."/>
            <person name="Nilsson R."/>
            <person name="Nishiguchi S."/>
            <person name="Nishikawa S."/>
            <person name="Nori F."/>
            <person name="Ohara O."/>
            <person name="Okazaki Y."/>
            <person name="Orlando V."/>
            <person name="Pang K.C."/>
            <person name="Pavan W.J."/>
            <person name="Pavesi G."/>
            <person name="Pesole G."/>
            <person name="Petrovsky N."/>
            <person name="Piazza S."/>
            <person name="Reed J."/>
            <person name="Reid J.F."/>
            <person name="Ring B.Z."/>
            <person name="Ringwald M."/>
            <person name="Rost B."/>
            <person name="Ruan Y."/>
            <person name="Salzberg S.L."/>
            <person name="Sandelin A."/>
            <person name="Schneider C."/>
            <person name="Schoenbach C."/>
            <person name="Sekiguchi K."/>
            <person name="Semple C.A."/>
            <person name="Seno S."/>
            <person name="Sessa L."/>
            <person name="Sheng Y."/>
            <person name="Shibata Y."/>
            <person name="Shimada H."/>
            <person name="Shimada K."/>
            <person name="Silva D."/>
            <person name="Sinclair B."/>
            <person name="Sperling S."/>
            <person name="Stupka E."/>
            <person name="Sugiura K."/>
            <person name="Sultana R."/>
            <person name="Takenaka Y."/>
            <person name="Taki K."/>
            <person name="Tammoja K."/>
            <person name="Tan S.L."/>
            <person name="Tang S."/>
            <person name="Taylor M.S."/>
            <person name="Tegner J."/>
            <person name="Teichmann S.A."/>
            <person name="Ueda H.R."/>
            <person name="van Nimwegen E."/>
            <person name="Verardo R."/>
            <person name="Wei C.L."/>
            <person name="Yagi K."/>
            <person name="Yamanishi H."/>
            <person name="Zabarovsky E."/>
            <person name="Zhu S."/>
            <person name="Zimmer A."/>
            <person name="Hide W."/>
            <person name="Bult C."/>
            <person name="Grimmond S.M."/>
            <person name="Teasdale R.D."/>
            <person name="Liu E.T."/>
            <person name="Brusic V."/>
            <person name="Quackenbush J."/>
            <person name="Wahlestedt C."/>
            <person name="Mattick J.S."/>
            <person name="Hume D.A."/>
            <person name="Kai C."/>
            <person name="Sasaki D."/>
            <person name="Tomaru Y."/>
            <person name="Fukuda S."/>
            <person name="Kanamori-Katayama M."/>
            <person name="Suzuki M."/>
            <person name="Aoki J."/>
            <person name="Arakawa T."/>
            <person name="Iida J."/>
            <person name="Imamura K."/>
            <person name="Itoh M."/>
            <person name="Kato T."/>
            <person name="Kawaji H."/>
            <person name="Kawagashira N."/>
            <person name="Kawashima T."/>
            <person name="Kojima M."/>
            <person name="Kondo S."/>
            <person name="Konno H."/>
            <person name="Nakano K."/>
            <person name="Ninomiya N."/>
            <person name="Nishio T."/>
            <person name="Okada M."/>
            <person name="Plessy C."/>
            <person name="Shibata K."/>
            <person name="Shiraki T."/>
            <person name="Suzuki S."/>
            <person name="Tagami M."/>
            <person name="Waki K."/>
            <person name="Watahiki A."/>
            <person name="Okamura-Oho Y."/>
            <person name="Suzuki H."/>
            <person name="Kawai J."/>
            <person name="Hayashizaki Y."/>
        </authorList>
    </citation>
    <scope>NUCLEOTIDE SEQUENCE [LARGE SCALE MRNA]</scope>
    <source>
        <strain evidence="9">C57BL/6J</strain>
        <tissue evidence="9">Vagina</tissue>
    </source>
</reference>
<reference evidence="6" key="3">
    <citation type="journal article" date="2007" name="Genomics">
        <title>Members of a novel gene family, Gsdm, are expressed exclusively in the epithelium of the skin and gastrointestinal tract in a highly tissue-specific manner.</title>
        <authorList>
            <person name="Tamura M."/>
            <person name="Tanaka S."/>
            <person name="Fujii T."/>
            <person name="Aoki A."/>
            <person name="Komiyama H."/>
            <person name="Ezawa K."/>
            <person name="Sumiyama K."/>
            <person name="Sagai T."/>
            <person name="Shiroishi T."/>
        </authorList>
    </citation>
    <scope>IDENTIFICATION</scope>
</reference>
<comment type="function">
    <molecule>Gasdermin-C</molecule>
    <text evidence="2">This form constitutes the precursor of the pore-forming protein: upon cleavage, the released N-terminal moiety (Gasdermin-C, N-terminal) binds to membranes and forms pores, triggering pyroptosis.</text>
</comment>
<comment type="function">
    <molecule>Gasdermin-C, N-terminal</molecule>
    <text evidence="2">Pore-forming protein that causes membrane permeabilization and pyroptosis. Produced by the cleavage of gasdermin-C by caspase CASP8 in response to death signals. After cleavage, moves to the plasma membrane where it strongly binds to membrane inner leaflet lipids. Homooligomerizes within the membrane and forms pores of 10-15 nanometers (nm) of inner diameter, triggering pyroptosis.</text>
</comment>
<comment type="activity regulation">
    <molecule>Gasdermin-C</molecule>
    <text evidence="2">The full-length protein before cleavage is inactive: intramolecular interactions between N- and C-terminal domains mediate autoinhibition in the absence of activation signal. The intrinsic pyroptosis-inducing activity is carried by the released N-terminal moiety (Gasdermin-C, N-terminal) following cleavage by caspase CASP8.</text>
</comment>
<comment type="subunit">
    <molecule>Gasdermin-C, N-terminal</molecule>
    <text evidence="1">Homooligomer; homooligomeric ring-shaped pore complex containing 27-28 subunits when inserted in the membrane.</text>
</comment>
<comment type="subcellular location">
    <molecule>Gasdermin-C</molecule>
    <subcellularLocation>
        <location evidence="2">Cytoplasm</location>
        <location evidence="2">Cytosol</location>
    </subcellularLocation>
</comment>
<comment type="subcellular location">
    <molecule>Gasdermin-C, N-terminal</molecule>
    <subcellularLocation>
        <location evidence="1">Cell membrane</location>
        <topology evidence="1">Multi-pass membrane protein</topology>
    </subcellularLocation>
</comment>
<comment type="domain">
    <text evidence="1">Intramolecular interactions between N- and C-terminal domains are important for autoinhibition in the absence of activation signal. The intrinsic pyroptosis-inducing activity is carried by the N-terminal domain.</text>
</comment>
<comment type="PTM">
    <text evidence="2">Cleavage by CASP8 relieves autoinhibition by releasing the N-terminal moiety (Gasdermin-C, N-terminal) that initiates pyroptosis.</text>
</comment>
<comment type="PTM">
    <text evidence="2">Palmitoylated.</text>
</comment>
<comment type="similarity">
    <text evidence="6">Belongs to the gasdermin family.</text>
</comment>
<comment type="caution">
    <text evidence="7">Despite its name, does not contain a functional leucine zipper.</text>
</comment>
<keyword id="KW-1003">Cell membrane</keyword>
<keyword id="KW-0963">Cytoplasm</keyword>
<keyword id="KW-0449">Lipoprotein</keyword>
<keyword id="KW-0472">Membrane</keyword>
<keyword id="KW-1210">Necrosis</keyword>
<keyword id="KW-0564">Palmitate</keyword>
<keyword id="KW-1185">Reference proteome</keyword>
<keyword id="KW-0812">Transmembrane</keyword>
<keyword id="KW-1134">Transmembrane beta strand</keyword>
<proteinExistence type="evidence at transcript level"/>
<evidence type="ECO:0000250" key="1">
    <source>
        <dbReference type="UniProtKB" id="Q5Y4Y6"/>
    </source>
</evidence>
<evidence type="ECO:0000250" key="2">
    <source>
        <dbReference type="UniProtKB" id="Q9BYG8"/>
    </source>
</evidence>
<evidence type="ECO:0000269" key="3">
    <source>
    </source>
</evidence>
<evidence type="ECO:0000303" key="4">
    <source>
    </source>
</evidence>
<evidence type="ECO:0000303" key="5">
    <source>
    </source>
</evidence>
<evidence type="ECO:0000305" key="6"/>
<evidence type="ECO:0000305" key="7">
    <source>
    </source>
</evidence>
<evidence type="ECO:0000312" key="8">
    <source>
        <dbReference type="EMBL" id="BAB40332.1"/>
    </source>
</evidence>
<evidence type="ECO:0000312" key="9">
    <source>
        <dbReference type="EMBL" id="BAE23451.1"/>
    </source>
</evidence>
<evidence type="ECO:0000312" key="10">
    <source>
        <dbReference type="MGI" id="MGI:1933176"/>
    </source>
</evidence>
<dbReference type="EMBL" id="AB042406">
    <property type="protein sequence ID" value="BAB40332.1"/>
    <property type="molecule type" value="mRNA"/>
</dbReference>
<dbReference type="EMBL" id="AK137662">
    <property type="protein sequence ID" value="BAE23451.1"/>
    <property type="molecule type" value="mRNA"/>
</dbReference>
<dbReference type="CCDS" id="CCDS37086.1"/>
<dbReference type="RefSeq" id="NP_113555.1">
    <property type="nucleotide sequence ID" value="NM_031378.3"/>
</dbReference>
<dbReference type="SMR" id="Q99NB5"/>
<dbReference type="FunCoup" id="Q99NB5">
    <property type="interactions" value="141"/>
</dbReference>
<dbReference type="STRING" id="10090.ENSMUSP00000105752"/>
<dbReference type="iPTMnet" id="Q99NB5"/>
<dbReference type="PhosphoSitePlus" id="Q99NB5"/>
<dbReference type="PaxDb" id="10090-ENSMUSP00000105752"/>
<dbReference type="ProteomicsDB" id="269842"/>
<dbReference type="DNASU" id="83492"/>
<dbReference type="Ensembl" id="ENSMUST00000110125.9">
    <property type="protein sequence ID" value="ENSMUSP00000105752.3"/>
    <property type="gene ID" value="ENSMUSG00000079025.10"/>
</dbReference>
<dbReference type="GeneID" id="83492"/>
<dbReference type="KEGG" id="mmu:83492"/>
<dbReference type="UCSC" id="uc007vyt.1">
    <property type="organism name" value="mouse"/>
</dbReference>
<dbReference type="AGR" id="MGI:1933176"/>
<dbReference type="CTD" id="56169"/>
<dbReference type="MGI" id="MGI:1933176">
    <property type="gene designation" value="Gsdmc"/>
</dbReference>
<dbReference type="VEuPathDB" id="HostDB:ENSMUSG00000079025"/>
<dbReference type="eggNOG" id="ENOG502S0IQ">
    <property type="taxonomic scope" value="Eukaryota"/>
</dbReference>
<dbReference type="GeneTree" id="ENSGT00950000183140"/>
<dbReference type="HOGENOM" id="CLU_040752_2_0_1"/>
<dbReference type="InParanoid" id="Q99NB5"/>
<dbReference type="OMA" id="ISLWITY"/>
<dbReference type="OrthoDB" id="9836623at2759"/>
<dbReference type="PhylomeDB" id="Q99NB5"/>
<dbReference type="TreeFam" id="TF331886"/>
<dbReference type="BioGRID-ORCS" id="83492">
    <property type="hits" value="3 hits in 77 CRISPR screens"/>
</dbReference>
<dbReference type="ChiTaRS" id="Gsdmc">
    <property type="organism name" value="mouse"/>
</dbReference>
<dbReference type="PRO" id="PR:Q99NB5"/>
<dbReference type="Proteomes" id="UP000000589">
    <property type="component" value="Chromosome 15"/>
</dbReference>
<dbReference type="RNAct" id="Q99NB5">
    <property type="molecule type" value="protein"/>
</dbReference>
<dbReference type="Bgee" id="ENSMUSG00000079025">
    <property type="expression patterns" value="Expressed in left colon and 61 other cell types or tissues"/>
</dbReference>
<dbReference type="ExpressionAtlas" id="Q99NB5">
    <property type="expression patterns" value="baseline and differential"/>
</dbReference>
<dbReference type="GO" id="GO:0005737">
    <property type="term" value="C:cytoplasm"/>
    <property type="evidence" value="ECO:0000250"/>
    <property type="project" value="UniProtKB"/>
</dbReference>
<dbReference type="GO" id="GO:0005829">
    <property type="term" value="C:cytosol"/>
    <property type="evidence" value="ECO:0007669"/>
    <property type="project" value="UniProtKB-SubCell"/>
</dbReference>
<dbReference type="GO" id="GO:0005886">
    <property type="term" value="C:plasma membrane"/>
    <property type="evidence" value="ECO:0007669"/>
    <property type="project" value="UniProtKB-SubCell"/>
</dbReference>
<dbReference type="GO" id="GO:0012501">
    <property type="term" value="P:programmed cell death"/>
    <property type="evidence" value="ECO:0007669"/>
    <property type="project" value="UniProtKB-KW"/>
</dbReference>
<dbReference type="InterPro" id="IPR007677">
    <property type="entry name" value="Gasdermin"/>
</dbReference>
<dbReference type="InterPro" id="IPR040460">
    <property type="entry name" value="Gasdermin_pore"/>
</dbReference>
<dbReference type="InterPro" id="IPR041263">
    <property type="entry name" value="Gasdermin_PUB"/>
</dbReference>
<dbReference type="PANTHER" id="PTHR16399">
    <property type="entry name" value="GASDERMIN"/>
    <property type="match status" value="1"/>
</dbReference>
<dbReference type="PANTHER" id="PTHR16399:SF21">
    <property type="entry name" value="GASDERMIN-C"/>
    <property type="match status" value="1"/>
</dbReference>
<dbReference type="Pfam" id="PF04598">
    <property type="entry name" value="Gasdermin"/>
    <property type="match status" value="1"/>
</dbReference>
<dbReference type="Pfam" id="PF17708">
    <property type="entry name" value="Gasdermin_C"/>
    <property type="match status" value="1"/>
</dbReference>
<protein>
    <recommendedName>
        <fullName evidence="5">Gasdermin-C</fullName>
    </recommendedName>
    <alternativeName>
        <fullName evidence="5">Gasdermin-C1</fullName>
    </alternativeName>
    <alternativeName>
        <fullName evidence="4">Melanoma-derived leucine zipper-containing extranuclear factor</fullName>
        <shortName evidence="4">mMLZE</shortName>
    </alternativeName>
    <component>
        <recommendedName>
            <fullName evidence="6">Gasdermin-C, N-terminal</fullName>
            <shortName evidence="6">GSDMC-NT</shortName>
        </recommendedName>
    </component>
    <component>
        <recommendedName>
            <fullName evidence="6">Gasdermin-C, C-terminal</fullName>
            <shortName evidence="6">GSDMC-CT</shortName>
        </recommendedName>
    </component>
</protein>
<feature type="chain" id="PRO_0000349129" description="Gasdermin-C">
    <location>
        <begin position="1"/>
        <end position="468"/>
    </location>
</feature>
<feature type="chain" id="PRO_0000451676" description="Gasdermin-C, N-terminal" evidence="6">
    <location>
        <begin position="1"/>
        <end status="unknown"/>
    </location>
</feature>
<feature type="chain" id="PRO_0000451677" description="Gasdermin-C, C-terminal" evidence="6">
    <location>
        <begin status="unknown"/>
        <end position="468"/>
    </location>
</feature>
<feature type="region of interest" description="Triggers pyroptosis" evidence="2">
    <location>
        <begin position="1"/>
        <end position="230"/>
    </location>
</feature>
<organism>
    <name type="scientific">Mus musculus</name>
    <name type="common">Mouse</name>
    <dbReference type="NCBI Taxonomy" id="10090"/>
    <lineage>
        <taxon>Eukaryota</taxon>
        <taxon>Metazoa</taxon>
        <taxon>Chordata</taxon>
        <taxon>Craniata</taxon>
        <taxon>Vertebrata</taxon>
        <taxon>Euteleostomi</taxon>
        <taxon>Mammalia</taxon>
        <taxon>Eutheria</taxon>
        <taxon>Euarchontoglires</taxon>
        <taxon>Glires</taxon>
        <taxon>Rodentia</taxon>
        <taxon>Myomorpha</taxon>
        <taxon>Muroidea</taxon>
        <taxon>Muridae</taxon>
        <taxon>Murinae</taxon>
        <taxon>Mus</taxon>
        <taxon>Mus</taxon>
    </lineage>
</organism>
<sequence>MSYTFDWLSKDVVKKLQGRDLRPVKCLSDATKFCLFNILQETSSRLALKTEYIPVGFTLLHLLEPNIPVPEPEVSAPIPLKHTISQKLKADLDVETIAGGEAGFVKSCGYDIEVQSKSIPNPKLESLQNRKLLDQLPTFMKTCWKDGKNLYVVTEAYEVTKDTVLEGTSNSKFAIKGIINQLVKVGGSGQWQTEKTDSIPIQKGSVLAYKKQQLVIEDNTCVILTSANTKKKMTFPMRFVGMSGHLRYQDLVIETGSWINDIDPIGTIKEPTHLDFMCLQNEVSEQTRLLAELSKDVQEVVFSSFLHMLCDRDVLYDLMKMLELNQLGHMDGPGGKILDELRKDSSLSWINLKDLILYLLQALMVLSDTQLCLLALSVEMRLLPHQVELVKSILQPNFKYPWNIPFTLQPQLLAPLQGEGLAITYELLEECGLKMELNNPRSTWDLEAKMPLSALYGSLSFLQQLSEA</sequence>
<accession>Q99NB5</accession>
<name>GSDMC_MOUSE</name>